<sequence length="1026" mass="109765">MAQGAMRFCSEGDCAISPPRCPRRWLPEGPVPQSPPASMYGSTGSLLRRVAGPGPRSRELGRVTAPCTPLRGPPSPRIAPSPWAPSSPTGQPPPGARSSVVIFRFVEKASVRPLNGLPAPGGLSRSWDLGGVSPPRPTPALGPGSHQKLRLEASTSDPLPAGGGSARPGTQGLLQGPPTQPQVGADGLYSSLPNGLGGPSEHLATLFRGPADTGLLNQGDIWSSPREVSSHAQRIARAKWEFFYGSLDPPSSGAKPPEQAPPSPPGVGSGQGSGVAVGRAAKYSETDLDTVPLRCYRETDIDEVLTEREEADSAIESQPSSEGLPGTARPPAPRPGPCLGPHPSLGSGNEDEDEAGGEEDVDDEVFEASEGARPGTRMPHSGPLKSPLPFLPGTSPSADGPDSFSCVFEAILESHRAKGTSYTSLASLEALASPGPTQSPFFTFELPPQPPAPRPDPPAPAPLAPLEPDSGTSSAADGPWTQRGEEEEAEAGAKQTPGRDPPSPCHSEDSFGLGAAPLGSEPPLNQLVSDSDSELDSTERLALGSTDTLSNGQKADLEAAQRLAKRLYRLDGFRKADVARHLGKNNDFSKLVAGEYLKFFVFTGMTLDQALRVFLKELALMGETQERERVLAHFSQRYFQCNPGALSSEDGAHTLTCALMLLNTDLHGHNIAETHDLRRLHRYLEGLNEGGDFPRELLKALYSSIKNEKLQWAIDEEELRRSLSELADPNPKVIKRVSGGSGSGSSPFLDLTPEPGAAVYKHGALVRKVHADPDCRKTPRGKRGWKNFHGILKGMILYLQKEEYQPGKALSEAELKNAISIHHALATRASDYSKRPHVFYLRTADWRVFLFQAPSLEQMQSWITRINVVAAMFSAPPFPAAVSSQKKFSRPLLPSAATRLSQEEQVRTHEAKLKAMASELREHRATQLTKKARGKEAEEQRQKEAYLEFEKSRYGTYAALLRVKLKAGSEELDAVEAAVAQAGGTEDGLPPPHSSPSLPANTSSQPRAQCSDSEARAGAGSGRWKP</sequence>
<organism>
    <name type="scientific">Bos taurus</name>
    <name type="common">Bovine</name>
    <dbReference type="NCBI Taxonomy" id="9913"/>
    <lineage>
        <taxon>Eukaryota</taxon>
        <taxon>Metazoa</taxon>
        <taxon>Chordata</taxon>
        <taxon>Craniata</taxon>
        <taxon>Vertebrata</taxon>
        <taxon>Euteleostomi</taxon>
        <taxon>Mammalia</taxon>
        <taxon>Eutheria</taxon>
        <taxon>Laurasiatheria</taxon>
        <taxon>Artiodactyla</taxon>
        <taxon>Ruminantia</taxon>
        <taxon>Pecora</taxon>
        <taxon>Bovidae</taxon>
        <taxon>Bovinae</taxon>
        <taxon>Bos</taxon>
    </lineage>
</organism>
<proteinExistence type="evidence at transcript level"/>
<name>PSD1_BOVIN</name>
<protein>
    <recommendedName>
        <fullName evidence="2">PH and SEC7 domain-containing protein 1</fullName>
    </recommendedName>
    <alternativeName>
        <fullName>Exchange factor for ADP-ribosylation factor guanine nucleotide factor 6</fullName>
        <shortName>Exchange factor for ARF6</shortName>
    </alternativeName>
    <alternativeName>
        <fullName>Exchange factor for ARF6 A</fullName>
    </alternativeName>
    <alternativeName>
        <fullName evidence="2">Pleckstrin homology and SEC7 domain-containing protein 1</fullName>
    </alternativeName>
</protein>
<comment type="function">
    <text evidence="1 2">Guanine nucleotide exchange factor for ARF6 (By similarity). Induces cytoskeletal remodeling (By similarity).</text>
</comment>
<comment type="subunit">
    <text evidence="2">Interacts with ACTN1.</text>
</comment>
<comment type="subcellular location">
    <subcellularLocation>
        <location evidence="1">Cell membrane</location>
    </subcellularLocation>
    <subcellularLocation>
        <location evidence="1">Cell projection</location>
        <location evidence="1">Ruffle membrane</location>
    </subcellularLocation>
    <subcellularLocation>
        <location evidence="1">Cleavage furrow</location>
    </subcellularLocation>
    <text evidence="1">Distributed uniformly on the plasma membrane, as well as throughout the cytoplasm during metaphase. Subsequently concentrated at patches in the equatorial region at the onset of cytokinesis, and becomes distributed in the equatorial region concurrent with cleavage furrow ingression. In later cytokinesis phases, fades away from the cleavage furrow and becomes uniformly distributed throughout the plasma membrane.</text>
</comment>
<comment type="similarity">
    <text evidence="3">Belongs to the PSD family.</text>
</comment>
<feature type="chain" id="PRO_0000411991" description="PH and SEC7 domain-containing protein 1">
    <location>
        <begin position="1"/>
        <end position="1026"/>
    </location>
</feature>
<feature type="domain" description="SEC7" evidence="5">
    <location>
        <begin position="514"/>
        <end position="708"/>
    </location>
</feature>
<feature type="domain" description="PH" evidence="4">
    <location>
        <begin position="758"/>
        <end position="871"/>
    </location>
</feature>
<feature type="region of interest" description="Disordered" evidence="6">
    <location>
        <begin position="25"/>
        <end position="97"/>
    </location>
</feature>
<feature type="region of interest" description="Disordered" evidence="6">
    <location>
        <begin position="126"/>
        <end position="196"/>
    </location>
</feature>
<feature type="region of interest" description="Disordered" evidence="6">
    <location>
        <begin position="246"/>
        <end position="403"/>
    </location>
</feature>
<feature type="region of interest" description="Disordered" evidence="6">
    <location>
        <begin position="436"/>
        <end position="538"/>
    </location>
</feature>
<feature type="region of interest" description="Disordered" evidence="6">
    <location>
        <begin position="924"/>
        <end position="943"/>
    </location>
</feature>
<feature type="region of interest" description="Disordered" evidence="6">
    <location>
        <begin position="978"/>
        <end position="1026"/>
    </location>
</feature>
<feature type="coiled-coil region" evidence="3">
    <location>
        <begin position="900"/>
        <end position="926"/>
    </location>
</feature>
<feature type="compositionally biased region" description="Pro residues" evidence="6">
    <location>
        <begin position="71"/>
        <end position="95"/>
    </location>
</feature>
<feature type="compositionally biased region" description="Low complexity" evidence="6">
    <location>
        <begin position="168"/>
        <end position="184"/>
    </location>
</feature>
<feature type="compositionally biased region" description="Acidic residues" evidence="6">
    <location>
        <begin position="300"/>
        <end position="313"/>
    </location>
</feature>
<feature type="compositionally biased region" description="Pro residues" evidence="6">
    <location>
        <begin position="328"/>
        <end position="340"/>
    </location>
</feature>
<feature type="compositionally biased region" description="Acidic residues" evidence="6">
    <location>
        <begin position="349"/>
        <end position="367"/>
    </location>
</feature>
<feature type="compositionally biased region" description="Pro residues" evidence="6">
    <location>
        <begin position="447"/>
        <end position="465"/>
    </location>
</feature>
<feature type="compositionally biased region" description="Basic and acidic residues" evidence="6">
    <location>
        <begin position="934"/>
        <end position="943"/>
    </location>
</feature>
<feature type="compositionally biased region" description="Polar residues" evidence="6">
    <location>
        <begin position="1000"/>
        <end position="1012"/>
    </location>
</feature>
<feature type="modified residue" description="Phosphoserine" evidence="2">
    <location>
        <position position="126"/>
    </location>
</feature>
<feature type="modified residue" description="Phosphoserine" evidence="2">
    <location>
        <position position="156"/>
    </location>
</feature>
<feature type="modified residue" description="Phosphoserine" evidence="2">
    <location>
        <position position="722"/>
    </location>
</feature>
<feature type="sequence conflict" description="In Ref. 2; AAI48973." evidence="8" ref="2">
    <original>T</original>
    <variation>I</variation>
    <location>
        <position position="155"/>
    </location>
</feature>
<feature type="sequence conflict" description="In Ref. 2; AAI48973." evidence="8" ref="2">
    <original>G</original>
    <variation>E</variation>
    <location>
        <position position="198"/>
    </location>
</feature>
<feature type="sequence conflict" description="In Ref. 2; AAI48973." evidence="8" ref="2">
    <original>AETHDLRRLHRY</original>
    <variation>GKRMTCGDFIGN</variation>
    <location>
        <begin position="672"/>
        <end position="683"/>
    </location>
</feature>
<feature type="sequence conflict" description="In Ref. 2; AAI48973." evidence="8" ref="2">
    <original>A</original>
    <variation>S</variation>
    <location>
        <position position="1008"/>
    </location>
</feature>
<evidence type="ECO:0000250" key="1">
    <source>
        <dbReference type="UniProtKB" id="A5PKW4"/>
    </source>
</evidence>
<evidence type="ECO:0000250" key="2">
    <source>
        <dbReference type="UniProtKB" id="Q5DTT2"/>
    </source>
</evidence>
<evidence type="ECO:0000255" key="3"/>
<evidence type="ECO:0000255" key="4">
    <source>
        <dbReference type="PROSITE-ProRule" id="PRU00145"/>
    </source>
</evidence>
<evidence type="ECO:0000255" key="5">
    <source>
        <dbReference type="PROSITE-ProRule" id="PRU00189"/>
    </source>
</evidence>
<evidence type="ECO:0000256" key="6">
    <source>
        <dbReference type="SAM" id="MobiDB-lite"/>
    </source>
</evidence>
<evidence type="ECO:0000269" key="7">
    <source>
    </source>
</evidence>
<evidence type="ECO:0000305" key="8"/>
<evidence type="ECO:0000312" key="9">
    <source>
        <dbReference type="EMBL" id="AAI48973.1"/>
    </source>
</evidence>
<reference key="1">
    <citation type="journal article" date="2009" name="Science">
        <title>The genome sequence of taurine cattle: a window to ruminant biology and evolution.</title>
        <authorList>
            <consortium name="The bovine genome sequencing and analysis consortium"/>
        </authorList>
    </citation>
    <scope>NUCLEOTIDE SEQUENCE [LARGE SCALE GENOMIC DNA]</scope>
    <source>
        <strain evidence="7">Hereford</strain>
    </source>
</reference>
<reference evidence="8 9" key="2">
    <citation type="submission" date="2007-07" db="EMBL/GenBank/DDBJ databases">
        <authorList>
            <consortium name="NIH - Mammalian Gene Collection (MGC) project"/>
        </authorList>
    </citation>
    <scope>NUCLEOTIDE SEQUENCE [LARGE SCALE MRNA] OF 78-1026</scope>
    <source>
        <strain evidence="9">Hereford</strain>
        <tissue evidence="9">Fetal brain</tissue>
    </source>
</reference>
<keyword id="KW-1003">Cell membrane</keyword>
<keyword id="KW-0966">Cell projection</keyword>
<keyword id="KW-0175">Coiled coil</keyword>
<keyword id="KW-0344">Guanine-nucleotide releasing factor</keyword>
<keyword id="KW-0472">Membrane</keyword>
<keyword id="KW-0597">Phosphoprotein</keyword>
<keyword id="KW-1185">Reference proteome</keyword>
<accession>F1MUS9</accession>
<accession>A6QNS4</accession>
<dbReference type="EMBL" id="AAFC03082941">
    <property type="status" value="NOT_ANNOTATED_CDS"/>
    <property type="molecule type" value="Genomic_DNA"/>
</dbReference>
<dbReference type="EMBL" id="BC148972">
    <property type="protein sequence ID" value="AAI48973.1"/>
    <property type="molecule type" value="mRNA"/>
</dbReference>
<dbReference type="RefSeq" id="NP_001178404.1">
    <property type="nucleotide sequence ID" value="NM_001191475.1"/>
</dbReference>
<dbReference type="SMR" id="F1MUS9"/>
<dbReference type="FunCoup" id="F1MUS9">
    <property type="interactions" value="1291"/>
</dbReference>
<dbReference type="STRING" id="9913.ENSBTAP00000004659"/>
<dbReference type="PaxDb" id="9913-ENSBTAP00000004659"/>
<dbReference type="GeneID" id="523124"/>
<dbReference type="KEGG" id="bta:523124"/>
<dbReference type="CTD" id="5662"/>
<dbReference type="eggNOG" id="KOG0932">
    <property type="taxonomic scope" value="Eukaryota"/>
</dbReference>
<dbReference type="InParanoid" id="F1MUS9"/>
<dbReference type="OrthoDB" id="2157641at2759"/>
<dbReference type="Proteomes" id="UP000009136">
    <property type="component" value="Unplaced"/>
</dbReference>
<dbReference type="GO" id="GO:0032154">
    <property type="term" value="C:cleavage furrow"/>
    <property type="evidence" value="ECO:0000250"/>
    <property type="project" value="UniProtKB"/>
</dbReference>
<dbReference type="GO" id="GO:0032587">
    <property type="term" value="C:ruffle membrane"/>
    <property type="evidence" value="ECO:0000250"/>
    <property type="project" value="UniProtKB"/>
</dbReference>
<dbReference type="GO" id="GO:0005085">
    <property type="term" value="F:guanyl-nucleotide exchange factor activity"/>
    <property type="evidence" value="ECO:0000250"/>
    <property type="project" value="UniProtKB"/>
</dbReference>
<dbReference type="GO" id="GO:0005543">
    <property type="term" value="F:phospholipid binding"/>
    <property type="evidence" value="ECO:0007669"/>
    <property type="project" value="InterPro"/>
</dbReference>
<dbReference type="GO" id="GO:0032012">
    <property type="term" value="P:regulation of ARF protein signal transduction"/>
    <property type="evidence" value="ECO:0007669"/>
    <property type="project" value="InterPro"/>
</dbReference>
<dbReference type="CDD" id="cd13295">
    <property type="entry name" value="PH_EFA6"/>
    <property type="match status" value="1"/>
</dbReference>
<dbReference type="CDD" id="cd00171">
    <property type="entry name" value="Sec7"/>
    <property type="match status" value="1"/>
</dbReference>
<dbReference type="FunFam" id="1.10.1000.11:FF:000004">
    <property type="entry name" value="PH and SEC7 domain-containing protein 2"/>
    <property type="match status" value="1"/>
</dbReference>
<dbReference type="FunFam" id="2.30.29.30:FF:000054">
    <property type="entry name" value="PH and SEC7 domain-containing protein 3"/>
    <property type="match status" value="1"/>
</dbReference>
<dbReference type="Gene3D" id="1.10.1000.11">
    <property type="entry name" value="Arf Nucleotide-binding Site Opener,domain 2"/>
    <property type="match status" value="1"/>
</dbReference>
<dbReference type="Gene3D" id="2.30.29.30">
    <property type="entry name" value="Pleckstrin-homology domain (PH domain)/Phosphotyrosine-binding domain (PTB)"/>
    <property type="match status" value="1"/>
</dbReference>
<dbReference type="InterPro" id="IPR011993">
    <property type="entry name" value="PH-like_dom_sf"/>
</dbReference>
<dbReference type="InterPro" id="IPR041681">
    <property type="entry name" value="PH_9"/>
</dbReference>
<dbReference type="InterPro" id="IPR001605">
    <property type="entry name" value="PH_dom-spectrin-type"/>
</dbReference>
<dbReference type="InterPro" id="IPR001849">
    <property type="entry name" value="PH_domain"/>
</dbReference>
<dbReference type="InterPro" id="IPR023394">
    <property type="entry name" value="Sec7_C_sf"/>
</dbReference>
<dbReference type="InterPro" id="IPR000904">
    <property type="entry name" value="Sec7_dom"/>
</dbReference>
<dbReference type="InterPro" id="IPR035999">
    <property type="entry name" value="Sec7_dom_sf"/>
</dbReference>
<dbReference type="PANTHER" id="PTHR10663">
    <property type="entry name" value="GUANYL-NUCLEOTIDE EXCHANGE FACTOR"/>
    <property type="match status" value="1"/>
</dbReference>
<dbReference type="PANTHER" id="PTHR10663:SF334">
    <property type="entry name" value="PH AND SEC7 DOMAIN-CONTAINING PROTEIN 1"/>
    <property type="match status" value="1"/>
</dbReference>
<dbReference type="Pfam" id="PF15410">
    <property type="entry name" value="PH_9"/>
    <property type="match status" value="1"/>
</dbReference>
<dbReference type="Pfam" id="PF01369">
    <property type="entry name" value="Sec7"/>
    <property type="match status" value="1"/>
</dbReference>
<dbReference type="PRINTS" id="PR00683">
    <property type="entry name" value="SPECTRINPH"/>
</dbReference>
<dbReference type="SMART" id="SM00233">
    <property type="entry name" value="PH"/>
    <property type="match status" value="1"/>
</dbReference>
<dbReference type="SMART" id="SM00222">
    <property type="entry name" value="Sec7"/>
    <property type="match status" value="1"/>
</dbReference>
<dbReference type="SUPFAM" id="SSF50729">
    <property type="entry name" value="PH domain-like"/>
    <property type="match status" value="1"/>
</dbReference>
<dbReference type="SUPFAM" id="SSF48425">
    <property type="entry name" value="Sec7 domain"/>
    <property type="match status" value="1"/>
</dbReference>
<dbReference type="PROSITE" id="PS50003">
    <property type="entry name" value="PH_DOMAIN"/>
    <property type="match status" value="1"/>
</dbReference>
<dbReference type="PROSITE" id="PS50190">
    <property type="entry name" value="SEC7"/>
    <property type="match status" value="1"/>
</dbReference>
<gene>
    <name type="primary">PSD</name>
</gene>